<dbReference type="EC" id="6.3.2.4" evidence="2"/>
<dbReference type="EMBL" id="CP000049">
    <property type="protein sequence ID" value="AAX17536.1"/>
    <property type="molecule type" value="Genomic_DNA"/>
</dbReference>
<dbReference type="SMR" id="A1QYZ4"/>
<dbReference type="KEGG" id="btu:BT0200"/>
<dbReference type="eggNOG" id="COG1181">
    <property type="taxonomic scope" value="Bacteria"/>
</dbReference>
<dbReference type="HOGENOM" id="CLU_039268_0_0_12"/>
<dbReference type="UniPathway" id="UPA00219"/>
<dbReference type="Proteomes" id="UP000001205">
    <property type="component" value="Chromosome"/>
</dbReference>
<dbReference type="GO" id="GO:0005829">
    <property type="term" value="C:cytosol"/>
    <property type="evidence" value="ECO:0007669"/>
    <property type="project" value="TreeGrafter"/>
</dbReference>
<dbReference type="GO" id="GO:0005524">
    <property type="term" value="F:ATP binding"/>
    <property type="evidence" value="ECO:0007669"/>
    <property type="project" value="UniProtKB-KW"/>
</dbReference>
<dbReference type="GO" id="GO:0008716">
    <property type="term" value="F:D-alanine-D-alanine ligase activity"/>
    <property type="evidence" value="ECO:0007669"/>
    <property type="project" value="UniProtKB-UniRule"/>
</dbReference>
<dbReference type="GO" id="GO:0046872">
    <property type="term" value="F:metal ion binding"/>
    <property type="evidence" value="ECO:0007669"/>
    <property type="project" value="UniProtKB-KW"/>
</dbReference>
<dbReference type="GO" id="GO:0071555">
    <property type="term" value="P:cell wall organization"/>
    <property type="evidence" value="ECO:0007669"/>
    <property type="project" value="UniProtKB-KW"/>
</dbReference>
<dbReference type="GO" id="GO:0009252">
    <property type="term" value="P:peptidoglycan biosynthetic process"/>
    <property type="evidence" value="ECO:0007669"/>
    <property type="project" value="UniProtKB-UniRule"/>
</dbReference>
<dbReference type="GO" id="GO:0008360">
    <property type="term" value="P:regulation of cell shape"/>
    <property type="evidence" value="ECO:0007669"/>
    <property type="project" value="UniProtKB-KW"/>
</dbReference>
<dbReference type="Gene3D" id="3.40.50.20">
    <property type="match status" value="1"/>
</dbReference>
<dbReference type="Gene3D" id="3.30.1490.20">
    <property type="entry name" value="ATP-grasp fold, A domain"/>
    <property type="match status" value="1"/>
</dbReference>
<dbReference type="Gene3D" id="3.30.470.20">
    <property type="entry name" value="ATP-grasp fold, B domain"/>
    <property type="match status" value="1"/>
</dbReference>
<dbReference type="HAMAP" id="MF_00047">
    <property type="entry name" value="Dala_Dala_lig"/>
    <property type="match status" value="1"/>
</dbReference>
<dbReference type="InterPro" id="IPR011761">
    <property type="entry name" value="ATP-grasp"/>
</dbReference>
<dbReference type="InterPro" id="IPR013815">
    <property type="entry name" value="ATP_grasp_subdomain_1"/>
</dbReference>
<dbReference type="InterPro" id="IPR000291">
    <property type="entry name" value="D-Ala_lig_Van_CS"/>
</dbReference>
<dbReference type="InterPro" id="IPR005905">
    <property type="entry name" value="D_ala_D_ala"/>
</dbReference>
<dbReference type="InterPro" id="IPR011095">
    <property type="entry name" value="Dala_Dala_lig_C"/>
</dbReference>
<dbReference type="InterPro" id="IPR011127">
    <property type="entry name" value="Dala_Dala_lig_N"/>
</dbReference>
<dbReference type="InterPro" id="IPR016185">
    <property type="entry name" value="PreATP-grasp_dom_sf"/>
</dbReference>
<dbReference type="NCBIfam" id="TIGR01205">
    <property type="entry name" value="D_ala_D_alaTIGR"/>
    <property type="match status" value="1"/>
</dbReference>
<dbReference type="NCBIfam" id="NF002528">
    <property type="entry name" value="PRK01966.1-4"/>
    <property type="match status" value="1"/>
</dbReference>
<dbReference type="NCBIfam" id="NF011168">
    <property type="entry name" value="PRK14570.1"/>
    <property type="match status" value="1"/>
</dbReference>
<dbReference type="PANTHER" id="PTHR23132">
    <property type="entry name" value="D-ALANINE--D-ALANINE LIGASE"/>
    <property type="match status" value="1"/>
</dbReference>
<dbReference type="PANTHER" id="PTHR23132:SF25">
    <property type="entry name" value="D-ALANINE--D-ALANINE LIGASE A"/>
    <property type="match status" value="1"/>
</dbReference>
<dbReference type="Pfam" id="PF07478">
    <property type="entry name" value="Dala_Dala_lig_C"/>
    <property type="match status" value="1"/>
</dbReference>
<dbReference type="Pfam" id="PF01820">
    <property type="entry name" value="Dala_Dala_lig_N"/>
    <property type="match status" value="1"/>
</dbReference>
<dbReference type="PIRSF" id="PIRSF039102">
    <property type="entry name" value="Ddl/VanB"/>
    <property type="match status" value="1"/>
</dbReference>
<dbReference type="SUPFAM" id="SSF56059">
    <property type="entry name" value="Glutathione synthetase ATP-binding domain-like"/>
    <property type="match status" value="1"/>
</dbReference>
<dbReference type="SUPFAM" id="SSF52440">
    <property type="entry name" value="PreATP-grasp domain"/>
    <property type="match status" value="1"/>
</dbReference>
<dbReference type="PROSITE" id="PS50975">
    <property type="entry name" value="ATP_GRASP"/>
    <property type="match status" value="1"/>
</dbReference>
<dbReference type="PROSITE" id="PS00843">
    <property type="entry name" value="DALA_DALA_LIGASE_1"/>
    <property type="match status" value="1"/>
</dbReference>
<dbReference type="PROSITE" id="PS00844">
    <property type="entry name" value="DALA_DALA_LIGASE_2"/>
    <property type="match status" value="1"/>
</dbReference>
<keyword id="KW-0067">ATP-binding</keyword>
<keyword id="KW-0133">Cell shape</keyword>
<keyword id="KW-0961">Cell wall biogenesis/degradation</keyword>
<keyword id="KW-0963">Cytoplasm</keyword>
<keyword id="KW-0436">Ligase</keyword>
<keyword id="KW-0460">Magnesium</keyword>
<keyword id="KW-0464">Manganese</keyword>
<keyword id="KW-0479">Metal-binding</keyword>
<keyword id="KW-0547">Nucleotide-binding</keyword>
<keyword id="KW-0573">Peptidoglycan synthesis</keyword>
<keyword id="KW-1185">Reference proteome</keyword>
<evidence type="ECO:0000250" key="1"/>
<evidence type="ECO:0000255" key="2">
    <source>
        <dbReference type="HAMAP-Rule" id="MF_00047"/>
    </source>
</evidence>
<gene>
    <name evidence="2" type="primary">ddl</name>
    <name type="ordered locus">BT0200</name>
</gene>
<proteinExistence type="inferred from homology"/>
<reference key="1">
    <citation type="submission" date="2004-12" db="EMBL/GenBank/DDBJ databases">
        <title>The genome sequence of Borrelia hermsii and Borrelia turicatae: comparative analysis of two agents of endemic N. America relapsing fever.</title>
        <authorList>
            <person name="Porcella S.F."/>
            <person name="Raffel S.J."/>
            <person name="Schrumpf M.E."/>
            <person name="Montgomery B."/>
            <person name="Smith T."/>
            <person name="Schwan T.G."/>
        </authorList>
    </citation>
    <scope>NUCLEOTIDE SEQUENCE [LARGE SCALE GENOMIC DNA]</scope>
    <source>
        <strain>91E135</strain>
    </source>
</reference>
<accession>A1QYZ4</accession>
<protein>
    <recommendedName>
        <fullName evidence="2">D-alanine--D-alanine ligase</fullName>
        <ecNumber evidence="2">6.3.2.4</ecNumber>
    </recommendedName>
    <alternativeName>
        <fullName evidence="2">D-Ala-D-Ala ligase</fullName>
    </alternativeName>
    <alternativeName>
        <fullName evidence="2">D-alanylalanine synthetase</fullName>
    </alternativeName>
</protein>
<comment type="function">
    <text evidence="2">Cell wall formation.</text>
</comment>
<comment type="catalytic activity">
    <reaction evidence="2">
        <text>2 D-alanine + ATP = D-alanyl-D-alanine + ADP + phosphate + H(+)</text>
        <dbReference type="Rhea" id="RHEA:11224"/>
        <dbReference type="ChEBI" id="CHEBI:15378"/>
        <dbReference type="ChEBI" id="CHEBI:30616"/>
        <dbReference type="ChEBI" id="CHEBI:43474"/>
        <dbReference type="ChEBI" id="CHEBI:57416"/>
        <dbReference type="ChEBI" id="CHEBI:57822"/>
        <dbReference type="ChEBI" id="CHEBI:456216"/>
        <dbReference type="EC" id="6.3.2.4"/>
    </reaction>
</comment>
<comment type="cofactor">
    <cofactor evidence="1">
        <name>Mg(2+)</name>
        <dbReference type="ChEBI" id="CHEBI:18420"/>
    </cofactor>
    <cofactor evidence="1">
        <name>Mn(2+)</name>
        <dbReference type="ChEBI" id="CHEBI:29035"/>
    </cofactor>
    <text evidence="1">Binds 2 magnesium or manganese ions per subunit.</text>
</comment>
<comment type="pathway">
    <text evidence="2">Cell wall biogenesis; peptidoglycan biosynthesis.</text>
</comment>
<comment type="subcellular location">
    <subcellularLocation>
        <location evidence="2">Cytoplasm</location>
    </subcellularLocation>
</comment>
<comment type="similarity">
    <text evidence="2">Belongs to the D-alanine--D-alanine ligase family.</text>
</comment>
<name>DDL_BORT9</name>
<organism>
    <name type="scientific">Borrelia turicatae (strain 91E135)</name>
    <dbReference type="NCBI Taxonomy" id="314724"/>
    <lineage>
        <taxon>Bacteria</taxon>
        <taxon>Pseudomonadati</taxon>
        <taxon>Spirochaetota</taxon>
        <taxon>Spirochaetia</taxon>
        <taxon>Spirochaetales</taxon>
        <taxon>Borreliaceae</taxon>
        <taxon>Borrelia</taxon>
    </lineage>
</organism>
<feature type="chain" id="PRO_1000117450" description="D-alanine--D-alanine ligase">
    <location>
        <begin position="1"/>
        <end position="365"/>
    </location>
</feature>
<feature type="domain" description="ATP-grasp" evidence="2">
    <location>
        <begin position="135"/>
        <end position="345"/>
    </location>
</feature>
<feature type="binding site" evidence="2">
    <location>
        <begin position="168"/>
        <end position="223"/>
    </location>
    <ligand>
        <name>ATP</name>
        <dbReference type="ChEBI" id="CHEBI:30616"/>
    </ligand>
</feature>
<feature type="binding site" evidence="2">
    <location>
        <position position="298"/>
    </location>
    <ligand>
        <name>Mg(2+)</name>
        <dbReference type="ChEBI" id="CHEBI:18420"/>
        <label>1</label>
    </ligand>
</feature>
<feature type="binding site" evidence="2">
    <location>
        <position position="312"/>
    </location>
    <ligand>
        <name>Mg(2+)</name>
        <dbReference type="ChEBI" id="CHEBI:18420"/>
        <label>1</label>
    </ligand>
</feature>
<feature type="binding site" evidence="2">
    <location>
        <position position="312"/>
    </location>
    <ligand>
        <name>Mg(2+)</name>
        <dbReference type="ChEBI" id="CHEBI:18420"/>
        <label>2</label>
    </ligand>
</feature>
<feature type="binding site" evidence="2">
    <location>
        <position position="314"/>
    </location>
    <ligand>
        <name>Mg(2+)</name>
        <dbReference type="ChEBI" id="CHEBI:18420"/>
        <label>2</label>
    </ligand>
</feature>
<sequence length="365" mass="41315">MMKKNLMLIFGGVSFEHEISLRSACGIYSALMKLDKYNVFSSFIDKITGVWYLLDSVPDDPKLIKKDSSAIISLIPGYGIFVNNKDLKIDVVFPIVHGRTGEDGAIQGFLKIMDIPCVGSGILGSAISINKYFCKLLLKSFNIPLVPFIGFKKYDYLLDKEGIKKDIKQSLDYPVIVKPAMLGSSIGISIAYNETQIEKCIEEAFAYDLTVVIEKFMRAREIECAVIGNEQIKIFTPGEIVIQDFVFYDYDAKYSTAPGNSVVFNIPAHLDTKHLLDIKEYAFFTYKCLELRGMARIDFLIEKDTDLVYINEINTIPGFTDISMFSKMCEHDGLDYGSLVDKLIALAFQSYAKRKERIDFHRLEN</sequence>